<evidence type="ECO:0000250" key="1">
    <source>
        <dbReference type="UniProtKB" id="P39940"/>
    </source>
</evidence>
<evidence type="ECO:0000250" key="2">
    <source>
        <dbReference type="UniProtKB" id="Q5BDP1"/>
    </source>
</evidence>
<evidence type="ECO:0000255" key="3">
    <source>
        <dbReference type="PROSITE-ProRule" id="PRU00041"/>
    </source>
</evidence>
<evidence type="ECO:0000255" key="4">
    <source>
        <dbReference type="PROSITE-ProRule" id="PRU00104"/>
    </source>
</evidence>
<evidence type="ECO:0000255" key="5">
    <source>
        <dbReference type="PROSITE-ProRule" id="PRU00224"/>
    </source>
</evidence>
<evidence type="ECO:0000256" key="6">
    <source>
        <dbReference type="SAM" id="MobiDB-lite"/>
    </source>
</evidence>
<evidence type="ECO:0000305" key="7"/>
<keyword id="KW-0963">Cytoplasm</keyword>
<keyword id="KW-1185">Reference proteome</keyword>
<keyword id="KW-0677">Repeat</keyword>
<keyword id="KW-0808">Transferase</keyword>
<keyword id="KW-0833">Ubl conjugation pathway</keyword>
<proteinExistence type="inferred from homology"/>
<accession>A1CQG2</accession>
<protein>
    <recommendedName>
        <fullName>Probable E3 ubiquitin-protein ligase hulA</fullName>
        <ecNumber>2.3.2.26</ecNumber>
    </recommendedName>
    <alternativeName>
        <fullName>HECT ubiquitin ligase A</fullName>
    </alternativeName>
    <alternativeName>
        <fullName>HECT-type E3 ubiquitin transferase hulA</fullName>
    </alternativeName>
</protein>
<gene>
    <name type="primary">hulA</name>
    <name type="ORF">ACLA_026000</name>
</gene>
<name>RSP5_ASPCL</name>
<dbReference type="EC" id="2.3.2.26"/>
<dbReference type="EMBL" id="DS027059">
    <property type="protein sequence ID" value="EAW07883.1"/>
    <property type="status" value="ALT_SEQ"/>
    <property type="molecule type" value="Genomic_DNA"/>
</dbReference>
<dbReference type="RefSeq" id="XP_001269309.1">
    <property type="nucleotide sequence ID" value="XM_001269308.1"/>
</dbReference>
<dbReference type="SMR" id="A1CQG2"/>
<dbReference type="STRING" id="344612.A1CQG2"/>
<dbReference type="EnsemblFungi" id="EAW07883">
    <property type="protein sequence ID" value="EAW07883"/>
    <property type="gene ID" value="ACLA_026000"/>
</dbReference>
<dbReference type="GeneID" id="4701851"/>
<dbReference type="KEGG" id="act:ACLA_026000"/>
<dbReference type="eggNOG" id="KOG0940">
    <property type="taxonomic scope" value="Eukaryota"/>
</dbReference>
<dbReference type="OrthoDB" id="8068875at2759"/>
<dbReference type="UniPathway" id="UPA00143"/>
<dbReference type="Proteomes" id="UP000006701">
    <property type="component" value="Unassembled WGS sequence"/>
</dbReference>
<dbReference type="GO" id="GO:0005934">
    <property type="term" value="C:cellular bud tip"/>
    <property type="evidence" value="ECO:0007669"/>
    <property type="project" value="EnsemblFungi"/>
</dbReference>
<dbReference type="GO" id="GO:0022626">
    <property type="term" value="C:cytosolic ribosome"/>
    <property type="evidence" value="ECO:0007669"/>
    <property type="project" value="EnsemblFungi"/>
</dbReference>
<dbReference type="GO" id="GO:0010008">
    <property type="term" value="C:endosome membrane"/>
    <property type="evidence" value="ECO:0007669"/>
    <property type="project" value="EnsemblFungi"/>
</dbReference>
<dbReference type="GO" id="GO:0005794">
    <property type="term" value="C:Golgi apparatus"/>
    <property type="evidence" value="ECO:0007669"/>
    <property type="project" value="EnsemblFungi"/>
</dbReference>
<dbReference type="GO" id="GO:0005634">
    <property type="term" value="C:nucleus"/>
    <property type="evidence" value="ECO:0007669"/>
    <property type="project" value="EnsemblFungi"/>
</dbReference>
<dbReference type="GO" id="GO:1990306">
    <property type="term" value="C:RSP5-BUL ubiquitin ligase complex"/>
    <property type="evidence" value="ECO:0007669"/>
    <property type="project" value="EnsemblFungi"/>
</dbReference>
<dbReference type="GO" id="GO:0000151">
    <property type="term" value="C:ubiquitin ligase complex"/>
    <property type="evidence" value="ECO:0007669"/>
    <property type="project" value="EnsemblFungi"/>
</dbReference>
<dbReference type="GO" id="GO:0035091">
    <property type="term" value="F:phosphatidylinositol binding"/>
    <property type="evidence" value="ECO:0007669"/>
    <property type="project" value="EnsemblFungi"/>
</dbReference>
<dbReference type="GO" id="GO:0043130">
    <property type="term" value="F:ubiquitin binding"/>
    <property type="evidence" value="ECO:0007669"/>
    <property type="project" value="EnsemblFungi"/>
</dbReference>
<dbReference type="GO" id="GO:0004842">
    <property type="term" value="F:ubiquitin-protein transferase activity"/>
    <property type="evidence" value="ECO:0000250"/>
    <property type="project" value="UniProtKB"/>
</dbReference>
<dbReference type="GO" id="GO:0034450">
    <property type="term" value="F:ubiquitin-ubiquitin ligase activity"/>
    <property type="evidence" value="ECO:0007669"/>
    <property type="project" value="EnsemblFungi"/>
</dbReference>
<dbReference type="GO" id="GO:0034605">
    <property type="term" value="P:cellular response to heat"/>
    <property type="evidence" value="ECO:0007669"/>
    <property type="project" value="EnsemblFungi"/>
</dbReference>
<dbReference type="GO" id="GO:1903577">
    <property type="term" value="P:cellular response to L-arginine"/>
    <property type="evidence" value="ECO:0007669"/>
    <property type="project" value="EnsemblFungi"/>
</dbReference>
<dbReference type="GO" id="GO:0006325">
    <property type="term" value="P:chromatin organization"/>
    <property type="evidence" value="ECO:0007669"/>
    <property type="project" value="EnsemblFungi"/>
</dbReference>
<dbReference type="GO" id="GO:0010994">
    <property type="term" value="P:free ubiquitin chain polymerization"/>
    <property type="evidence" value="ECO:0007669"/>
    <property type="project" value="EnsemblFungi"/>
</dbReference>
<dbReference type="GO" id="GO:0072671">
    <property type="term" value="P:mitochondria-associated ubiquitin-dependent protein catabolic process"/>
    <property type="evidence" value="ECO:0007669"/>
    <property type="project" value="EnsemblFungi"/>
</dbReference>
<dbReference type="GO" id="GO:0007005">
    <property type="term" value="P:mitochondrion organization"/>
    <property type="evidence" value="ECO:0007669"/>
    <property type="project" value="EnsemblFungi"/>
</dbReference>
<dbReference type="GO" id="GO:0070651">
    <property type="term" value="P:nonfunctional rRNA decay"/>
    <property type="evidence" value="ECO:0007669"/>
    <property type="project" value="EnsemblFungi"/>
</dbReference>
<dbReference type="GO" id="GO:0016973">
    <property type="term" value="P:poly(A)+ mRNA export from nucleus"/>
    <property type="evidence" value="ECO:0007669"/>
    <property type="project" value="EnsemblFungi"/>
</dbReference>
<dbReference type="GO" id="GO:0045723">
    <property type="term" value="P:positive regulation of fatty acid biosynthetic process"/>
    <property type="evidence" value="ECO:0007669"/>
    <property type="project" value="EnsemblFungi"/>
</dbReference>
<dbReference type="GO" id="GO:0032436">
    <property type="term" value="P:positive regulation of proteasomal ubiquitin-dependent protein catabolic process"/>
    <property type="evidence" value="ECO:0007669"/>
    <property type="project" value="EnsemblFungi"/>
</dbReference>
<dbReference type="GO" id="GO:0048260">
    <property type="term" value="P:positive regulation of receptor-mediated endocytosis"/>
    <property type="evidence" value="ECO:0007669"/>
    <property type="project" value="EnsemblFungi"/>
</dbReference>
<dbReference type="GO" id="GO:0045944">
    <property type="term" value="P:positive regulation of transcription by RNA polymerase II"/>
    <property type="evidence" value="ECO:0007669"/>
    <property type="project" value="EnsemblFungi"/>
</dbReference>
<dbReference type="GO" id="GO:0070534">
    <property type="term" value="P:protein K63-linked ubiquitination"/>
    <property type="evidence" value="ECO:0007669"/>
    <property type="project" value="EnsemblFungi"/>
</dbReference>
<dbReference type="GO" id="GO:0006515">
    <property type="term" value="P:protein quality control for misfolded or incompletely synthesized proteins"/>
    <property type="evidence" value="ECO:0007669"/>
    <property type="project" value="EnsemblFungi"/>
</dbReference>
<dbReference type="GO" id="GO:0043328">
    <property type="term" value="P:protein transport to vacuole involved in ubiquitin-dependent protein catabolic process via the multivesicular body sorting pathway"/>
    <property type="evidence" value="ECO:0000250"/>
    <property type="project" value="UniProtKB"/>
</dbReference>
<dbReference type="GO" id="GO:0016567">
    <property type="term" value="P:protein ubiquitination"/>
    <property type="evidence" value="ECO:0000250"/>
    <property type="project" value="UniProtKB"/>
</dbReference>
<dbReference type="GO" id="GO:0032956">
    <property type="term" value="P:regulation of actin cytoskeleton organization"/>
    <property type="evidence" value="ECO:0007669"/>
    <property type="project" value="EnsemblFungi"/>
</dbReference>
<dbReference type="GO" id="GO:0010794">
    <property type="term" value="P:regulation of dolichol biosynthetic process"/>
    <property type="evidence" value="ECO:0007669"/>
    <property type="project" value="EnsemblFungi"/>
</dbReference>
<dbReference type="GO" id="GO:0032443">
    <property type="term" value="P:regulation of ergosterol biosynthetic process"/>
    <property type="evidence" value="ECO:0007669"/>
    <property type="project" value="EnsemblFungi"/>
</dbReference>
<dbReference type="GO" id="GO:0010793">
    <property type="term" value="P:regulation of mRNA export from nucleus"/>
    <property type="evidence" value="ECO:0007669"/>
    <property type="project" value="EnsemblFungi"/>
</dbReference>
<dbReference type="GO" id="GO:0006808">
    <property type="term" value="P:regulation of nitrogen utilization"/>
    <property type="evidence" value="ECO:0007669"/>
    <property type="project" value="EnsemblFungi"/>
</dbReference>
<dbReference type="GO" id="GO:0019220">
    <property type="term" value="P:regulation of phosphate metabolic process"/>
    <property type="evidence" value="ECO:0007669"/>
    <property type="project" value="EnsemblFungi"/>
</dbReference>
<dbReference type="GO" id="GO:0032880">
    <property type="term" value="P:regulation of protein localization"/>
    <property type="evidence" value="ECO:0007669"/>
    <property type="project" value="EnsemblFungi"/>
</dbReference>
<dbReference type="GO" id="GO:2000203">
    <property type="term" value="P:regulation of ribosomal large subunit export from nucleus"/>
    <property type="evidence" value="ECO:0007669"/>
    <property type="project" value="EnsemblFungi"/>
</dbReference>
<dbReference type="GO" id="GO:2000232">
    <property type="term" value="P:regulation of rRNA processing"/>
    <property type="evidence" value="ECO:0007669"/>
    <property type="project" value="EnsemblFungi"/>
</dbReference>
<dbReference type="GO" id="GO:2000238">
    <property type="term" value="P:regulation of tRNA export from nucleus"/>
    <property type="evidence" value="ECO:0007669"/>
    <property type="project" value="EnsemblFungi"/>
</dbReference>
<dbReference type="GO" id="GO:2000235">
    <property type="term" value="P:regulation of tRNA processing"/>
    <property type="evidence" value="ECO:0007669"/>
    <property type="project" value="EnsemblFungi"/>
</dbReference>
<dbReference type="GO" id="GO:0010795">
    <property type="term" value="P:regulation of ubiquinone biosynthetic process"/>
    <property type="evidence" value="ECO:0007669"/>
    <property type="project" value="EnsemblFungi"/>
</dbReference>
<dbReference type="GO" id="GO:0034517">
    <property type="term" value="P:ribophagy"/>
    <property type="evidence" value="ECO:0007669"/>
    <property type="project" value="EnsemblFungi"/>
</dbReference>
<dbReference type="GO" id="GO:0070086">
    <property type="term" value="P:ubiquitin-dependent endocytosis"/>
    <property type="evidence" value="ECO:0007669"/>
    <property type="project" value="EnsemblFungi"/>
</dbReference>
<dbReference type="CDD" id="cd08382">
    <property type="entry name" value="C2_Smurf-like"/>
    <property type="match status" value="1"/>
</dbReference>
<dbReference type="CDD" id="cd00078">
    <property type="entry name" value="HECTc"/>
    <property type="match status" value="1"/>
</dbReference>
<dbReference type="CDD" id="cd00201">
    <property type="entry name" value="WW"/>
    <property type="match status" value="3"/>
</dbReference>
<dbReference type="FunFam" id="2.20.70.10:FF:000011">
    <property type="entry name" value="E3 ubiquitin-protein ligase"/>
    <property type="match status" value="1"/>
</dbReference>
<dbReference type="FunFam" id="2.20.70.10:FF:000017">
    <property type="entry name" value="E3 ubiquitin-protein ligase"/>
    <property type="match status" value="1"/>
</dbReference>
<dbReference type="FunFam" id="2.20.70.10:FF:000053">
    <property type="entry name" value="E3 ubiquitin-protein ligase"/>
    <property type="match status" value="1"/>
</dbReference>
<dbReference type="FunFam" id="2.60.40.150:FF:000074">
    <property type="entry name" value="E3 ubiquitin-protein ligase"/>
    <property type="match status" value="1"/>
</dbReference>
<dbReference type="FunFam" id="3.90.1750.10:FF:000005">
    <property type="entry name" value="E3 ubiquitin-protein ligase"/>
    <property type="match status" value="1"/>
</dbReference>
<dbReference type="FunFam" id="3.30.2160.10:FF:000001">
    <property type="entry name" value="E3 ubiquitin-protein ligase NEDD4-like"/>
    <property type="match status" value="1"/>
</dbReference>
<dbReference type="FunFam" id="3.30.2410.10:FF:000001">
    <property type="entry name" value="E3 ubiquitin-protein ligase NEDD4-like"/>
    <property type="match status" value="1"/>
</dbReference>
<dbReference type="Gene3D" id="2.20.70.10">
    <property type="match status" value="2"/>
</dbReference>
<dbReference type="Gene3D" id="2.60.40.150">
    <property type="entry name" value="C2 domain"/>
    <property type="match status" value="1"/>
</dbReference>
<dbReference type="Gene3D" id="3.30.2160.10">
    <property type="entry name" value="Hect, E3 ligase catalytic domain"/>
    <property type="match status" value="1"/>
</dbReference>
<dbReference type="Gene3D" id="3.30.2410.10">
    <property type="entry name" value="Hect, E3 ligase catalytic domain"/>
    <property type="match status" value="1"/>
</dbReference>
<dbReference type="Gene3D" id="3.90.1750.10">
    <property type="entry name" value="Hect, E3 ligase catalytic domains"/>
    <property type="match status" value="1"/>
</dbReference>
<dbReference type="InterPro" id="IPR000008">
    <property type="entry name" value="C2_dom"/>
</dbReference>
<dbReference type="InterPro" id="IPR035892">
    <property type="entry name" value="C2_domain_sf"/>
</dbReference>
<dbReference type="InterPro" id="IPR024928">
    <property type="entry name" value="E3_ub_ligase_SMURF1"/>
</dbReference>
<dbReference type="InterPro" id="IPR050409">
    <property type="entry name" value="E3_ubiq-protein_ligase"/>
</dbReference>
<dbReference type="InterPro" id="IPR000569">
    <property type="entry name" value="HECT_dom"/>
</dbReference>
<dbReference type="InterPro" id="IPR035983">
    <property type="entry name" value="Hect_E3_ubiquitin_ligase"/>
</dbReference>
<dbReference type="InterPro" id="IPR001202">
    <property type="entry name" value="WW_dom"/>
</dbReference>
<dbReference type="InterPro" id="IPR036020">
    <property type="entry name" value="WW_dom_sf"/>
</dbReference>
<dbReference type="PANTHER" id="PTHR11254:SF440">
    <property type="entry name" value="E3 UBIQUITIN-PROTEIN LIGASE NEDD-4"/>
    <property type="match status" value="1"/>
</dbReference>
<dbReference type="PANTHER" id="PTHR11254">
    <property type="entry name" value="HECT DOMAIN UBIQUITIN-PROTEIN LIGASE"/>
    <property type="match status" value="1"/>
</dbReference>
<dbReference type="Pfam" id="PF00168">
    <property type="entry name" value="C2"/>
    <property type="match status" value="1"/>
</dbReference>
<dbReference type="Pfam" id="PF00632">
    <property type="entry name" value="HECT"/>
    <property type="match status" value="1"/>
</dbReference>
<dbReference type="Pfam" id="PF00397">
    <property type="entry name" value="WW"/>
    <property type="match status" value="3"/>
</dbReference>
<dbReference type="PIRSF" id="PIRSF001569">
    <property type="entry name" value="E3_ub_ligase_SMURF1"/>
    <property type="match status" value="1"/>
</dbReference>
<dbReference type="SMART" id="SM00239">
    <property type="entry name" value="C2"/>
    <property type="match status" value="1"/>
</dbReference>
<dbReference type="SMART" id="SM00119">
    <property type="entry name" value="HECTc"/>
    <property type="match status" value="1"/>
</dbReference>
<dbReference type="SMART" id="SM00456">
    <property type="entry name" value="WW"/>
    <property type="match status" value="3"/>
</dbReference>
<dbReference type="SUPFAM" id="SSF49562">
    <property type="entry name" value="C2 domain (Calcium/lipid-binding domain, CaLB)"/>
    <property type="match status" value="1"/>
</dbReference>
<dbReference type="SUPFAM" id="SSF56204">
    <property type="entry name" value="Hect, E3 ligase catalytic domain"/>
    <property type="match status" value="1"/>
</dbReference>
<dbReference type="SUPFAM" id="SSF51045">
    <property type="entry name" value="WW domain"/>
    <property type="match status" value="3"/>
</dbReference>
<dbReference type="PROSITE" id="PS50004">
    <property type="entry name" value="C2"/>
    <property type="match status" value="1"/>
</dbReference>
<dbReference type="PROSITE" id="PS50237">
    <property type="entry name" value="HECT"/>
    <property type="match status" value="1"/>
</dbReference>
<dbReference type="PROSITE" id="PS01159">
    <property type="entry name" value="WW_DOMAIN_1"/>
    <property type="match status" value="3"/>
</dbReference>
<dbReference type="PROSITE" id="PS50020">
    <property type="entry name" value="WW_DOMAIN_2"/>
    <property type="match status" value="3"/>
</dbReference>
<organism>
    <name type="scientific">Aspergillus clavatus (strain ATCC 1007 / CBS 513.65 / DSM 816 / NCTC 3887 / NRRL 1 / QM 1276 / 107)</name>
    <dbReference type="NCBI Taxonomy" id="344612"/>
    <lineage>
        <taxon>Eukaryota</taxon>
        <taxon>Fungi</taxon>
        <taxon>Dikarya</taxon>
        <taxon>Ascomycota</taxon>
        <taxon>Pezizomycotina</taxon>
        <taxon>Eurotiomycetes</taxon>
        <taxon>Eurotiomycetidae</taxon>
        <taxon>Eurotiales</taxon>
        <taxon>Aspergillaceae</taxon>
        <taxon>Aspergillus</taxon>
        <taxon>Aspergillus subgen. Fumigati</taxon>
    </lineage>
</organism>
<comment type="function">
    <text evidence="2">E3 ubiquitin-protein ligase which accepts ubiquitin from an E2 ubiquitin-conjugating enzyme in the form of a thioester and then directly transfers the ubiquitin to targeted substrates. Probably involved in the regulatory network controlling carbon source utilization.</text>
</comment>
<comment type="catalytic activity">
    <reaction>
        <text>S-ubiquitinyl-[E2 ubiquitin-conjugating enzyme]-L-cysteine + [acceptor protein]-L-lysine = [E2 ubiquitin-conjugating enzyme]-L-cysteine + N(6)-ubiquitinyl-[acceptor protein]-L-lysine.</text>
        <dbReference type="EC" id="2.3.2.26"/>
    </reaction>
</comment>
<comment type="pathway">
    <text>Protein modification; protein ubiquitination.</text>
</comment>
<comment type="subunit">
    <text evidence="2">Interacts with creD.</text>
</comment>
<comment type="subcellular location">
    <subcellularLocation>
        <location evidence="1">Cytoplasm</location>
    </subcellularLocation>
</comment>
<comment type="similarity">
    <text evidence="7">Belongs to the RSP5/NEDD4 family.</text>
</comment>
<comment type="sequence caution" evidence="7">
    <conflict type="erroneous gene model prediction">
        <sequence resource="EMBL-CDS" id="EAW07883"/>
    </conflict>
</comment>
<sequence length="815" mass="92245">MGSNLPSQPNLRLTIIAADGLYKRDVFRFPDPFAVATVGGEQTQTTSVIKKTLNPYWNEMFDLRVNEESILAIQIFDQKKFKKKDQGFLGVINVRIGDVIDLEMGGDEMLTRDLKKSNDNLVVHGKLIINLSTNLSTPNTNQANGLHRSHIQPSTSSGLVPQVGASAAHPAASPAPIDPAASNPSLHPQRVPSTNRPPSTVAPGAAAGATPTNTQGSRTNLSSFEDSQGRLPAGWERREDNLGRTYYVDHNTRTTTWTRPSSNYNEQTQRTQREANMQLERRAHQSRMLPEDRTGANSPNLPETSQQAPTPPAGGSANAVSMMATGATTAGTGELPPGWEQRTTPEGRPYFVDHNTRTTTWVDPRRQQYIRMYGQNANGTNTTIQQQPVSQLGPLPSGWEMRLTNTARVYFVDHNTKTTTWDDPRLPSSLDQGVPQYKRDFRRKLIYFRSQPALRIMSGQCHVKVRRNNIFEDSYAEIMRQSASDLKKRLMIKFDGEDGLDYGGLSREFFFLLSHEMFNPFYCLFEYSAHDNYTLQINPHSGVNPEHLNYFKFIGRVVGLAIFHRRFLDSFFIGAFYKMMLRKKVSLQDMEGVDEDLHRNLTWTLDNDIEGVLELTFAVDDEKFGERRTIDLKPGGRDIPVTNENKGEYVELVTEWKIVKRVEEQFNAFMSGFNELIPADLVNVFDERELELLIGGIADIDVDDWKKHTDYRGYQESDDVIQNFWKVVRTWDAEQKSRLLQFTTGTSRIPVNGFKDLQGSDGPRRFTIEKSGDPVALPKSHTCFNRLDLPPYKTYETLEHKMSIAVEETLGFGQE</sequence>
<feature type="chain" id="PRO_0000395703" description="Probable E3 ubiquitin-protein ligase hulA">
    <location>
        <begin position="1"/>
        <end position="815"/>
    </location>
</feature>
<feature type="domain" description="C2" evidence="3">
    <location>
        <begin position="1"/>
        <end position="112"/>
    </location>
</feature>
<feature type="domain" description="WW 1" evidence="5">
    <location>
        <begin position="229"/>
        <end position="262"/>
    </location>
</feature>
<feature type="domain" description="WW 2" evidence="5">
    <location>
        <begin position="333"/>
        <end position="366"/>
    </location>
</feature>
<feature type="domain" description="WW 3" evidence="5">
    <location>
        <begin position="393"/>
        <end position="426"/>
    </location>
</feature>
<feature type="domain" description="HECT" evidence="4">
    <location>
        <begin position="482"/>
        <end position="815"/>
    </location>
</feature>
<feature type="region of interest" description="Disordered" evidence="6">
    <location>
        <begin position="134"/>
        <end position="237"/>
    </location>
</feature>
<feature type="region of interest" description="Disordered" evidence="6">
    <location>
        <begin position="253"/>
        <end position="353"/>
    </location>
</feature>
<feature type="compositionally biased region" description="Low complexity" evidence="6">
    <location>
        <begin position="165"/>
        <end position="185"/>
    </location>
</feature>
<feature type="compositionally biased region" description="Low complexity" evidence="6">
    <location>
        <begin position="202"/>
        <end position="212"/>
    </location>
</feature>
<feature type="compositionally biased region" description="Polar residues" evidence="6">
    <location>
        <begin position="213"/>
        <end position="226"/>
    </location>
</feature>
<feature type="compositionally biased region" description="Polar residues" evidence="6">
    <location>
        <begin position="253"/>
        <end position="270"/>
    </location>
</feature>
<feature type="compositionally biased region" description="Basic and acidic residues" evidence="6">
    <location>
        <begin position="279"/>
        <end position="294"/>
    </location>
</feature>
<feature type="compositionally biased region" description="Polar residues" evidence="6">
    <location>
        <begin position="295"/>
        <end position="308"/>
    </location>
</feature>
<feature type="compositionally biased region" description="Low complexity" evidence="6">
    <location>
        <begin position="324"/>
        <end position="333"/>
    </location>
</feature>
<feature type="active site" description="Glycyl thioester intermediate" evidence="4">
    <location>
        <position position="783"/>
    </location>
</feature>
<reference key="1">
    <citation type="journal article" date="2008" name="PLoS Genet.">
        <title>Genomic islands in the pathogenic filamentous fungus Aspergillus fumigatus.</title>
        <authorList>
            <person name="Fedorova N.D."/>
            <person name="Khaldi N."/>
            <person name="Joardar V.S."/>
            <person name="Maiti R."/>
            <person name="Amedeo P."/>
            <person name="Anderson M.J."/>
            <person name="Crabtree J."/>
            <person name="Silva J.C."/>
            <person name="Badger J.H."/>
            <person name="Albarraq A."/>
            <person name="Angiuoli S."/>
            <person name="Bussey H."/>
            <person name="Bowyer P."/>
            <person name="Cotty P.J."/>
            <person name="Dyer P.S."/>
            <person name="Egan A."/>
            <person name="Galens K."/>
            <person name="Fraser-Liggett C.M."/>
            <person name="Haas B.J."/>
            <person name="Inman J.M."/>
            <person name="Kent R."/>
            <person name="Lemieux S."/>
            <person name="Malavazi I."/>
            <person name="Orvis J."/>
            <person name="Roemer T."/>
            <person name="Ronning C.M."/>
            <person name="Sundaram J.P."/>
            <person name="Sutton G."/>
            <person name="Turner G."/>
            <person name="Venter J.C."/>
            <person name="White O.R."/>
            <person name="Whitty B.R."/>
            <person name="Youngman P."/>
            <person name="Wolfe K.H."/>
            <person name="Goldman G.H."/>
            <person name="Wortman J.R."/>
            <person name="Jiang B."/>
            <person name="Denning D.W."/>
            <person name="Nierman W.C."/>
        </authorList>
    </citation>
    <scope>NUCLEOTIDE SEQUENCE [LARGE SCALE GENOMIC DNA]</scope>
    <source>
        <strain>ATCC 1007 / CBS 513.65 / DSM 816 / NCTC 3887 / NRRL 1 / QM 1276 / 107</strain>
    </source>
</reference>